<proteinExistence type="inferred from homology"/>
<feature type="chain" id="PRO_0000188410" description="Glycerol-3-phosphate acyltransferase">
    <location>
        <begin position="1"/>
        <end position="200"/>
    </location>
</feature>
<feature type="transmembrane region" description="Helical" evidence="1">
    <location>
        <begin position="2"/>
        <end position="22"/>
    </location>
</feature>
<feature type="transmembrane region" description="Helical" evidence="1">
    <location>
        <begin position="51"/>
        <end position="71"/>
    </location>
</feature>
<feature type="transmembrane region" description="Helical" evidence="1">
    <location>
        <begin position="84"/>
        <end position="104"/>
    </location>
</feature>
<feature type="transmembrane region" description="Helical" evidence="1">
    <location>
        <begin position="114"/>
        <end position="134"/>
    </location>
</feature>
<feature type="transmembrane region" description="Helical" evidence="1">
    <location>
        <begin position="158"/>
        <end position="178"/>
    </location>
</feature>
<reference key="1">
    <citation type="journal article" date="2000" name="Nature">
        <title>Complete DNA sequence of a serogroup A strain of Neisseria meningitidis Z2491.</title>
        <authorList>
            <person name="Parkhill J."/>
            <person name="Achtman M."/>
            <person name="James K.D."/>
            <person name="Bentley S.D."/>
            <person name="Churcher C.M."/>
            <person name="Klee S.R."/>
            <person name="Morelli G."/>
            <person name="Basham D."/>
            <person name="Brown D."/>
            <person name="Chillingworth T."/>
            <person name="Davies R.M."/>
            <person name="Davis P."/>
            <person name="Devlin K."/>
            <person name="Feltwell T."/>
            <person name="Hamlin N."/>
            <person name="Holroyd S."/>
            <person name="Jagels K."/>
            <person name="Leather S."/>
            <person name="Moule S."/>
            <person name="Mungall K.L."/>
            <person name="Quail M.A."/>
            <person name="Rajandream M.A."/>
            <person name="Rutherford K.M."/>
            <person name="Simmonds M."/>
            <person name="Skelton J."/>
            <person name="Whitehead S."/>
            <person name="Spratt B.G."/>
            <person name="Barrell B.G."/>
        </authorList>
    </citation>
    <scope>NUCLEOTIDE SEQUENCE [LARGE SCALE GENOMIC DNA]</scope>
    <source>
        <strain>DSM 15465 / Z2491</strain>
    </source>
</reference>
<organism>
    <name type="scientific">Neisseria meningitidis serogroup A / serotype 4A (strain DSM 15465 / Z2491)</name>
    <dbReference type="NCBI Taxonomy" id="122587"/>
    <lineage>
        <taxon>Bacteria</taxon>
        <taxon>Pseudomonadati</taxon>
        <taxon>Pseudomonadota</taxon>
        <taxon>Betaproteobacteria</taxon>
        <taxon>Neisseriales</taxon>
        <taxon>Neisseriaceae</taxon>
        <taxon>Neisseria</taxon>
    </lineage>
</organism>
<protein>
    <recommendedName>
        <fullName evidence="1">Glycerol-3-phosphate acyltransferase</fullName>
    </recommendedName>
    <alternativeName>
        <fullName evidence="1">Acyl-PO4 G3P acyltransferase</fullName>
    </alternativeName>
    <alternativeName>
        <fullName evidence="1">Acyl-phosphate--glycerol-3-phosphate acyltransferase</fullName>
    </alternativeName>
    <alternativeName>
        <fullName evidence="1">G3P acyltransferase</fullName>
        <shortName evidence="1">GPAT</shortName>
        <ecNumber evidence="1">2.3.1.275</ecNumber>
    </alternativeName>
    <alternativeName>
        <fullName evidence="1">Lysophosphatidic acid synthase</fullName>
        <shortName evidence="1">LPA synthase</shortName>
    </alternativeName>
</protein>
<comment type="function">
    <text evidence="1">Catalyzes the transfer of an acyl group from acyl-phosphate (acyl-PO(4)) to glycerol-3-phosphate (G3P) to form lysophosphatidic acid (LPA). This enzyme utilizes acyl-phosphate as fatty acyl donor, but not acyl-CoA or acyl-ACP.</text>
</comment>
<comment type="catalytic activity">
    <reaction evidence="1">
        <text>an acyl phosphate + sn-glycerol 3-phosphate = a 1-acyl-sn-glycero-3-phosphate + phosphate</text>
        <dbReference type="Rhea" id="RHEA:34075"/>
        <dbReference type="ChEBI" id="CHEBI:43474"/>
        <dbReference type="ChEBI" id="CHEBI:57597"/>
        <dbReference type="ChEBI" id="CHEBI:57970"/>
        <dbReference type="ChEBI" id="CHEBI:59918"/>
        <dbReference type="EC" id="2.3.1.275"/>
    </reaction>
</comment>
<comment type="pathway">
    <text evidence="1">Lipid metabolism; phospholipid metabolism.</text>
</comment>
<comment type="subunit">
    <text evidence="1">Probably interacts with PlsX.</text>
</comment>
<comment type="subcellular location">
    <subcellularLocation>
        <location evidence="1">Cell inner membrane</location>
        <topology evidence="1">Multi-pass membrane protein</topology>
    </subcellularLocation>
</comment>
<comment type="similarity">
    <text evidence="1">Belongs to the PlsY family.</text>
</comment>
<gene>
    <name evidence="1" type="primary">plsY</name>
    <name type="ordered locus">NMA1261</name>
</gene>
<keyword id="KW-0997">Cell inner membrane</keyword>
<keyword id="KW-1003">Cell membrane</keyword>
<keyword id="KW-0444">Lipid biosynthesis</keyword>
<keyword id="KW-0443">Lipid metabolism</keyword>
<keyword id="KW-0472">Membrane</keyword>
<keyword id="KW-0594">Phospholipid biosynthesis</keyword>
<keyword id="KW-1208">Phospholipid metabolism</keyword>
<keyword id="KW-0808">Transferase</keyword>
<keyword id="KW-0812">Transmembrane</keyword>
<keyword id="KW-1133">Transmembrane helix</keyword>
<sequence length="200" mass="20796">MFNIPAVAVSYLIGSLSFAVIVSKYYGMDDPRTYGSGNPGATNVLRSGKKKAAALTLLGDAAKGLVAVLLARVLQEPLGLSDSAIAAVALAALVGHMWPVFFGFKGGKGVATALGVLLALSPTTALVCALIWLVMAFGFKVSSLAALTATIAAPLAALFFMPHTSWIFATLAIAILVLLRHKSNILNLIKGKESKIGEKR</sequence>
<evidence type="ECO:0000255" key="1">
    <source>
        <dbReference type="HAMAP-Rule" id="MF_01043"/>
    </source>
</evidence>
<accession>Q9JUL4</accession>
<accession>A1IRQ5</accession>
<dbReference type="EC" id="2.3.1.275" evidence="1"/>
<dbReference type="EMBL" id="AL157959">
    <property type="protein sequence ID" value="CAM08449.1"/>
    <property type="molecule type" value="Genomic_DNA"/>
</dbReference>
<dbReference type="PIR" id="C81894">
    <property type="entry name" value="C81894"/>
</dbReference>
<dbReference type="RefSeq" id="WP_002240500.1">
    <property type="nucleotide sequence ID" value="NC_003116.1"/>
</dbReference>
<dbReference type="SMR" id="Q9JUL4"/>
<dbReference type="EnsemblBacteria" id="CAM08449">
    <property type="protein sequence ID" value="CAM08449"/>
    <property type="gene ID" value="NMA1261"/>
</dbReference>
<dbReference type="GeneID" id="93386134"/>
<dbReference type="KEGG" id="nma:NMA1261"/>
<dbReference type="HOGENOM" id="CLU_081254_0_0_4"/>
<dbReference type="UniPathway" id="UPA00085"/>
<dbReference type="Proteomes" id="UP000000626">
    <property type="component" value="Chromosome"/>
</dbReference>
<dbReference type="GO" id="GO:0005886">
    <property type="term" value="C:plasma membrane"/>
    <property type="evidence" value="ECO:0007669"/>
    <property type="project" value="UniProtKB-SubCell"/>
</dbReference>
<dbReference type="GO" id="GO:0043772">
    <property type="term" value="F:acyl-phosphate glycerol-3-phosphate acyltransferase activity"/>
    <property type="evidence" value="ECO:0007669"/>
    <property type="project" value="UniProtKB-UniRule"/>
</dbReference>
<dbReference type="GO" id="GO:0008654">
    <property type="term" value="P:phospholipid biosynthetic process"/>
    <property type="evidence" value="ECO:0007669"/>
    <property type="project" value="UniProtKB-UniRule"/>
</dbReference>
<dbReference type="HAMAP" id="MF_01043">
    <property type="entry name" value="PlsY"/>
    <property type="match status" value="1"/>
</dbReference>
<dbReference type="InterPro" id="IPR003811">
    <property type="entry name" value="G3P_acylTferase_PlsY"/>
</dbReference>
<dbReference type="NCBIfam" id="TIGR00023">
    <property type="entry name" value="glycerol-3-phosphate 1-O-acyltransferase PlsY"/>
    <property type="match status" value="1"/>
</dbReference>
<dbReference type="PANTHER" id="PTHR30309:SF0">
    <property type="entry name" value="GLYCEROL-3-PHOSPHATE ACYLTRANSFERASE-RELATED"/>
    <property type="match status" value="1"/>
</dbReference>
<dbReference type="PANTHER" id="PTHR30309">
    <property type="entry name" value="INNER MEMBRANE PROTEIN YGIH"/>
    <property type="match status" value="1"/>
</dbReference>
<dbReference type="Pfam" id="PF02660">
    <property type="entry name" value="G3P_acyltransf"/>
    <property type="match status" value="1"/>
</dbReference>
<dbReference type="SMART" id="SM01207">
    <property type="entry name" value="G3P_acyltransf"/>
    <property type="match status" value="1"/>
</dbReference>
<name>PLSY_NEIMA</name>